<gene>
    <name evidence="1" type="primary">lipA</name>
    <name type="ordered locus">YPA_2501</name>
</gene>
<protein>
    <recommendedName>
        <fullName evidence="1">Lipoyl synthase</fullName>
        <ecNumber evidence="1">2.8.1.8</ecNumber>
    </recommendedName>
    <alternativeName>
        <fullName evidence="1">Lip-syn</fullName>
        <shortName evidence="1">LS</shortName>
    </alternativeName>
    <alternativeName>
        <fullName evidence="1">Lipoate synthase</fullName>
    </alternativeName>
    <alternativeName>
        <fullName evidence="1">Lipoic acid synthase</fullName>
    </alternativeName>
    <alternativeName>
        <fullName evidence="1">Sulfur insertion protein LipA</fullName>
    </alternativeName>
</protein>
<evidence type="ECO:0000255" key="1">
    <source>
        <dbReference type="HAMAP-Rule" id="MF_00206"/>
    </source>
</evidence>
<evidence type="ECO:0000255" key="2">
    <source>
        <dbReference type="PROSITE-ProRule" id="PRU01266"/>
    </source>
</evidence>
<accession>Q1C507</accession>
<keyword id="KW-0004">4Fe-4S</keyword>
<keyword id="KW-0963">Cytoplasm</keyword>
<keyword id="KW-0408">Iron</keyword>
<keyword id="KW-0411">Iron-sulfur</keyword>
<keyword id="KW-0479">Metal-binding</keyword>
<keyword id="KW-0949">S-adenosyl-L-methionine</keyword>
<keyword id="KW-0808">Transferase</keyword>
<reference key="1">
    <citation type="journal article" date="2006" name="J. Bacteriol.">
        <title>Complete genome sequence of Yersinia pestis strains Antiqua and Nepal516: evidence of gene reduction in an emerging pathogen.</title>
        <authorList>
            <person name="Chain P.S.G."/>
            <person name="Hu P."/>
            <person name="Malfatti S.A."/>
            <person name="Radnedge L."/>
            <person name="Larimer F."/>
            <person name="Vergez L.M."/>
            <person name="Worsham P."/>
            <person name="Chu M.C."/>
            <person name="Andersen G.L."/>
        </authorList>
    </citation>
    <scope>NUCLEOTIDE SEQUENCE [LARGE SCALE GENOMIC DNA]</scope>
    <source>
        <strain>Antiqua</strain>
    </source>
</reference>
<name>LIPA_YERPA</name>
<feature type="chain" id="PRO_1000012302" description="Lipoyl synthase">
    <location>
        <begin position="1"/>
        <end position="321"/>
    </location>
</feature>
<feature type="domain" description="Radical SAM core" evidence="2">
    <location>
        <begin position="80"/>
        <end position="297"/>
    </location>
</feature>
<feature type="binding site" evidence="1">
    <location>
        <position position="68"/>
    </location>
    <ligand>
        <name>[4Fe-4S] cluster</name>
        <dbReference type="ChEBI" id="CHEBI:49883"/>
        <label>1</label>
    </ligand>
</feature>
<feature type="binding site" evidence="1">
    <location>
        <position position="73"/>
    </location>
    <ligand>
        <name>[4Fe-4S] cluster</name>
        <dbReference type="ChEBI" id="CHEBI:49883"/>
        <label>1</label>
    </ligand>
</feature>
<feature type="binding site" evidence="1">
    <location>
        <position position="79"/>
    </location>
    <ligand>
        <name>[4Fe-4S] cluster</name>
        <dbReference type="ChEBI" id="CHEBI:49883"/>
        <label>1</label>
    </ligand>
</feature>
<feature type="binding site" evidence="1">
    <location>
        <position position="94"/>
    </location>
    <ligand>
        <name>[4Fe-4S] cluster</name>
        <dbReference type="ChEBI" id="CHEBI:49883"/>
        <label>2</label>
        <note>4Fe-4S-S-AdoMet</note>
    </ligand>
</feature>
<feature type="binding site" evidence="1">
    <location>
        <position position="98"/>
    </location>
    <ligand>
        <name>[4Fe-4S] cluster</name>
        <dbReference type="ChEBI" id="CHEBI:49883"/>
        <label>2</label>
        <note>4Fe-4S-S-AdoMet</note>
    </ligand>
</feature>
<feature type="binding site" evidence="1">
    <location>
        <position position="101"/>
    </location>
    <ligand>
        <name>[4Fe-4S] cluster</name>
        <dbReference type="ChEBI" id="CHEBI:49883"/>
        <label>2</label>
        <note>4Fe-4S-S-AdoMet</note>
    </ligand>
</feature>
<feature type="binding site" evidence="1">
    <location>
        <position position="308"/>
    </location>
    <ligand>
        <name>[4Fe-4S] cluster</name>
        <dbReference type="ChEBI" id="CHEBI:49883"/>
        <label>1</label>
    </ligand>
</feature>
<proteinExistence type="inferred from homology"/>
<comment type="function">
    <text evidence="1">Catalyzes the radical-mediated insertion of two sulfur atoms into the C-6 and C-8 positions of the octanoyl moiety bound to the lipoyl domains of lipoate-dependent enzymes, thereby converting the octanoylated domains into lipoylated derivatives.</text>
</comment>
<comment type="catalytic activity">
    <reaction evidence="1">
        <text>[[Fe-S] cluster scaffold protein carrying a second [4Fe-4S](2+) cluster] + N(6)-octanoyl-L-lysyl-[protein] + 2 oxidized [2Fe-2S]-[ferredoxin] + 2 S-adenosyl-L-methionine + 4 H(+) = [[Fe-S] cluster scaffold protein] + N(6)-[(R)-dihydrolipoyl]-L-lysyl-[protein] + 4 Fe(3+) + 2 hydrogen sulfide + 2 5'-deoxyadenosine + 2 L-methionine + 2 reduced [2Fe-2S]-[ferredoxin]</text>
        <dbReference type="Rhea" id="RHEA:16585"/>
        <dbReference type="Rhea" id="RHEA-COMP:9928"/>
        <dbReference type="Rhea" id="RHEA-COMP:10000"/>
        <dbReference type="Rhea" id="RHEA-COMP:10001"/>
        <dbReference type="Rhea" id="RHEA-COMP:10475"/>
        <dbReference type="Rhea" id="RHEA-COMP:14568"/>
        <dbReference type="Rhea" id="RHEA-COMP:14569"/>
        <dbReference type="ChEBI" id="CHEBI:15378"/>
        <dbReference type="ChEBI" id="CHEBI:17319"/>
        <dbReference type="ChEBI" id="CHEBI:29034"/>
        <dbReference type="ChEBI" id="CHEBI:29919"/>
        <dbReference type="ChEBI" id="CHEBI:33722"/>
        <dbReference type="ChEBI" id="CHEBI:33737"/>
        <dbReference type="ChEBI" id="CHEBI:33738"/>
        <dbReference type="ChEBI" id="CHEBI:57844"/>
        <dbReference type="ChEBI" id="CHEBI:59789"/>
        <dbReference type="ChEBI" id="CHEBI:78809"/>
        <dbReference type="ChEBI" id="CHEBI:83100"/>
        <dbReference type="EC" id="2.8.1.8"/>
    </reaction>
</comment>
<comment type="cofactor">
    <cofactor evidence="1">
        <name>[4Fe-4S] cluster</name>
        <dbReference type="ChEBI" id="CHEBI:49883"/>
    </cofactor>
    <text evidence="1">Binds 2 [4Fe-4S] clusters per subunit. One cluster is coordinated with 3 cysteines and an exchangeable S-adenosyl-L-methionine.</text>
</comment>
<comment type="pathway">
    <text evidence="1">Protein modification; protein lipoylation via endogenous pathway; protein N(6)-(lipoyl)lysine from octanoyl-[acyl-carrier-protein]: step 2/2.</text>
</comment>
<comment type="subcellular location">
    <subcellularLocation>
        <location evidence="1">Cytoplasm</location>
    </subcellularLocation>
</comment>
<comment type="similarity">
    <text evidence="1">Belongs to the radical SAM superfamily. Lipoyl synthase family.</text>
</comment>
<sequence>MSKPIQMERGVKYRDADKMALIPVKNVVTERQELLRKPEWLKIKLPTDSSRIQGIKAAMRKNGLHSVCEEASCPNLSECFNHGTATFMILGAICTRRCPFCDVAHGRPVTPDANEPEKLAQTIQDMGLRYVVITSVDRDDLRDGGAQHFADCISAIRAKNPTIKIETLVPDFRGRMDRALDILTATPPDVFNHNLENVPRVYRQVRPGANYDWSLKLLERFKEAHPDIPTKSGLMVGLGETNAEIVEVMHDLRRHGVTMLTLGQYLQPSRHHLPVQRYVSPAEFDEMKAEAMAMGFTHAACGPFVRSSYHADLQAKGMEVK</sequence>
<dbReference type="EC" id="2.8.1.8" evidence="1"/>
<dbReference type="EMBL" id="CP000308">
    <property type="protein sequence ID" value="ABG14465.1"/>
    <property type="molecule type" value="Genomic_DNA"/>
</dbReference>
<dbReference type="RefSeq" id="WP_002210320.1">
    <property type="nucleotide sequence ID" value="NZ_CP009906.1"/>
</dbReference>
<dbReference type="SMR" id="Q1C507"/>
<dbReference type="GeneID" id="96664611"/>
<dbReference type="KEGG" id="ypa:YPA_2501"/>
<dbReference type="UniPathway" id="UPA00538">
    <property type="reaction ID" value="UER00593"/>
</dbReference>
<dbReference type="Proteomes" id="UP000001971">
    <property type="component" value="Chromosome"/>
</dbReference>
<dbReference type="GO" id="GO:0005737">
    <property type="term" value="C:cytoplasm"/>
    <property type="evidence" value="ECO:0007669"/>
    <property type="project" value="UniProtKB-SubCell"/>
</dbReference>
<dbReference type="GO" id="GO:0051539">
    <property type="term" value="F:4 iron, 4 sulfur cluster binding"/>
    <property type="evidence" value="ECO:0007669"/>
    <property type="project" value="UniProtKB-UniRule"/>
</dbReference>
<dbReference type="GO" id="GO:0016992">
    <property type="term" value="F:lipoate synthase activity"/>
    <property type="evidence" value="ECO:0007669"/>
    <property type="project" value="UniProtKB-UniRule"/>
</dbReference>
<dbReference type="GO" id="GO:0046872">
    <property type="term" value="F:metal ion binding"/>
    <property type="evidence" value="ECO:0007669"/>
    <property type="project" value="UniProtKB-KW"/>
</dbReference>
<dbReference type="CDD" id="cd01335">
    <property type="entry name" value="Radical_SAM"/>
    <property type="match status" value="1"/>
</dbReference>
<dbReference type="FunFam" id="3.20.20.70:FF:000023">
    <property type="entry name" value="Lipoyl synthase"/>
    <property type="match status" value="1"/>
</dbReference>
<dbReference type="Gene3D" id="3.20.20.70">
    <property type="entry name" value="Aldolase class I"/>
    <property type="match status" value="1"/>
</dbReference>
<dbReference type="HAMAP" id="MF_00206">
    <property type="entry name" value="Lipoyl_synth"/>
    <property type="match status" value="1"/>
</dbReference>
<dbReference type="InterPro" id="IPR013785">
    <property type="entry name" value="Aldolase_TIM"/>
</dbReference>
<dbReference type="InterPro" id="IPR006638">
    <property type="entry name" value="Elp3/MiaA/NifB-like_rSAM"/>
</dbReference>
<dbReference type="InterPro" id="IPR031691">
    <property type="entry name" value="LIAS_N"/>
</dbReference>
<dbReference type="InterPro" id="IPR003698">
    <property type="entry name" value="Lipoyl_synth"/>
</dbReference>
<dbReference type="InterPro" id="IPR007197">
    <property type="entry name" value="rSAM"/>
</dbReference>
<dbReference type="NCBIfam" id="TIGR00510">
    <property type="entry name" value="lipA"/>
    <property type="match status" value="1"/>
</dbReference>
<dbReference type="NCBIfam" id="NF004019">
    <property type="entry name" value="PRK05481.1"/>
    <property type="match status" value="1"/>
</dbReference>
<dbReference type="NCBIfam" id="NF009544">
    <property type="entry name" value="PRK12928.1"/>
    <property type="match status" value="1"/>
</dbReference>
<dbReference type="PANTHER" id="PTHR10949">
    <property type="entry name" value="LIPOYL SYNTHASE"/>
    <property type="match status" value="1"/>
</dbReference>
<dbReference type="PANTHER" id="PTHR10949:SF0">
    <property type="entry name" value="LIPOYL SYNTHASE, MITOCHONDRIAL"/>
    <property type="match status" value="1"/>
</dbReference>
<dbReference type="Pfam" id="PF16881">
    <property type="entry name" value="LIAS_N"/>
    <property type="match status" value="1"/>
</dbReference>
<dbReference type="Pfam" id="PF04055">
    <property type="entry name" value="Radical_SAM"/>
    <property type="match status" value="1"/>
</dbReference>
<dbReference type="PIRSF" id="PIRSF005963">
    <property type="entry name" value="Lipoyl_synth"/>
    <property type="match status" value="1"/>
</dbReference>
<dbReference type="SFLD" id="SFLDF00271">
    <property type="entry name" value="lipoyl_synthase"/>
    <property type="match status" value="1"/>
</dbReference>
<dbReference type="SFLD" id="SFLDG01058">
    <property type="entry name" value="lipoyl_synthase_like"/>
    <property type="match status" value="1"/>
</dbReference>
<dbReference type="SMART" id="SM00729">
    <property type="entry name" value="Elp3"/>
    <property type="match status" value="1"/>
</dbReference>
<dbReference type="SUPFAM" id="SSF102114">
    <property type="entry name" value="Radical SAM enzymes"/>
    <property type="match status" value="1"/>
</dbReference>
<dbReference type="PROSITE" id="PS51918">
    <property type="entry name" value="RADICAL_SAM"/>
    <property type="match status" value="1"/>
</dbReference>
<organism>
    <name type="scientific">Yersinia pestis bv. Antiqua (strain Antiqua)</name>
    <dbReference type="NCBI Taxonomy" id="360102"/>
    <lineage>
        <taxon>Bacteria</taxon>
        <taxon>Pseudomonadati</taxon>
        <taxon>Pseudomonadota</taxon>
        <taxon>Gammaproteobacteria</taxon>
        <taxon>Enterobacterales</taxon>
        <taxon>Yersiniaceae</taxon>
        <taxon>Yersinia</taxon>
    </lineage>
</organism>